<accession>Q5GYM0</accession>
<reference key="1">
    <citation type="journal article" date="2005" name="Nucleic Acids Res.">
        <title>The genome sequence of Xanthomonas oryzae pathovar oryzae KACC10331, the bacterial blight pathogen of rice.</title>
        <authorList>
            <person name="Lee B.-M."/>
            <person name="Park Y.-J."/>
            <person name="Park D.-S."/>
            <person name="Kang H.-W."/>
            <person name="Kim J.-G."/>
            <person name="Song E.-S."/>
            <person name="Park I.-C."/>
            <person name="Yoon U.-H."/>
            <person name="Hahn J.-H."/>
            <person name="Koo B.-S."/>
            <person name="Lee G.-B."/>
            <person name="Kim H."/>
            <person name="Park H.-S."/>
            <person name="Yoon K.-O."/>
            <person name="Kim J.-H."/>
            <person name="Jung C.-H."/>
            <person name="Koh N.-H."/>
            <person name="Seo J.-S."/>
            <person name="Go S.-J."/>
        </authorList>
    </citation>
    <scope>NUCLEOTIDE SEQUENCE [LARGE SCALE GENOMIC DNA]</scope>
    <source>
        <strain>KACC10331 / KXO85</strain>
    </source>
</reference>
<organism>
    <name type="scientific">Xanthomonas oryzae pv. oryzae (strain KACC10331 / KXO85)</name>
    <dbReference type="NCBI Taxonomy" id="291331"/>
    <lineage>
        <taxon>Bacteria</taxon>
        <taxon>Pseudomonadati</taxon>
        <taxon>Pseudomonadota</taxon>
        <taxon>Gammaproteobacteria</taxon>
        <taxon>Lysobacterales</taxon>
        <taxon>Lysobacteraceae</taxon>
        <taxon>Xanthomonas</taxon>
    </lineage>
</organism>
<gene>
    <name evidence="1" type="primary">miaA</name>
    <name type="ordered locus">XOO2947</name>
</gene>
<comment type="function">
    <text evidence="1">Catalyzes the transfer of a dimethylallyl group onto the adenine at position 37 in tRNAs that read codons beginning with uridine, leading to the formation of N6-(dimethylallyl)adenosine (i(6)A).</text>
</comment>
<comment type="catalytic activity">
    <reaction evidence="1">
        <text>adenosine(37) in tRNA + dimethylallyl diphosphate = N(6)-dimethylallyladenosine(37) in tRNA + diphosphate</text>
        <dbReference type="Rhea" id="RHEA:26482"/>
        <dbReference type="Rhea" id="RHEA-COMP:10162"/>
        <dbReference type="Rhea" id="RHEA-COMP:10375"/>
        <dbReference type="ChEBI" id="CHEBI:33019"/>
        <dbReference type="ChEBI" id="CHEBI:57623"/>
        <dbReference type="ChEBI" id="CHEBI:74411"/>
        <dbReference type="ChEBI" id="CHEBI:74415"/>
        <dbReference type="EC" id="2.5.1.75"/>
    </reaction>
</comment>
<comment type="cofactor">
    <cofactor evidence="1">
        <name>Mg(2+)</name>
        <dbReference type="ChEBI" id="CHEBI:18420"/>
    </cofactor>
</comment>
<comment type="subunit">
    <text evidence="1">Monomer.</text>
</comment>
<comment type="similarity">
    <text evidence="1">Belongs to the IPP transferase family.</text>
</comment>
<comment type="sequence caution" evidence="2">
    <conflict type="erroneous initiation">
        <sequence resource="EMBL-CDS" id="AAW76201"/>
    </conflict>
</comment>
<evidence type="ECO:0000255" key="1">
    <source>
        <dbReference type="HAMAP-Rule" id="MF_00185"/>
    </source>
</evidence>
<evidence type="ECO:0000305" key="2"/>
<name>MIAA_XANOR</name>
<keyword id="KW-0067">ATP-binding</keyword>
<keyword id="KW-0460">Magnesium</keyword>
<keyword id="KW-0547">Nucleotide-binding</keyword>
<keyword id="KW-1185">Reference proteome</keyword>
<keyword id="KW-0808">Transferase</keyword>
<keyword id="KW-0819">tRNA processing</keyword>
<dbReference type="EC" id="2.5.1.75" evidence="1"/>
<dbReference type="EMBL" id="AE013598">
    <property type="protein sequence ID" value="AAW76201.1"/>
    <property type="status" value="ALT_INIT"/>
    <property type="molecule type" value="Genomic_DNA"/>
</dbReference>
<dbReference type="SMR" id="Q5GYM0"/>
<dbReference type="STRING" id="291331.XOO2947"/>
<dbReference type="KEGG" id="xoo:XOO2947"/>
<dbReference type="PATRIC" id="fig|291331.8.peg.3264"/>
<dbReference type="HOGENOM" id="CLU_032616_0_0_6"/>
<dbReference type="Proteomes" id="UP000006735">
    <property type="component" value="Chromosome"/>
</dbReference>
<dbReference type="GO" id="GO:0005524">
    <property type="term" value="F:ATP binding"/>
    <property type="evidence" value="ECO:0007669"/>
    <property type="project" value="UniProtKB-UniRule"/>
</dbReference>
<dbReference type="GO" id="GO:0052381">
    <property type="term" value="F:tRNA dimethylallyltransferase activity"/>
    <property type="evidence" value="ECO:0007669"/>
    <property type="project" value="UniProtKB-UniRule"/>
</dbReference>
<dbReference type="GO" id="GO:0006400">
    <property type="term" value="P:tRNA modification"/>
    <property type="evidence" value="ECO:0007669"/>
    <property type="project" value="TreeGrafter"/>
</dbReference>
<dbReference type="CDD" id="cd02019">
    <property type="entry name" value="NK"/>
    <property type="match status" value="1"/>
</dbReference>
<dbReference type="FunFam" id="1.10.20.140:FF:000001">
    <property type="entry name" value="tRNA dimethylallyltransferase"/>
    <property type="match status" value="1"/>
</dbReference>
<dbReference type="Gene3D" id="1.10.20.140">
    <property type="match status" value="1"/>
</dbReference>
<dbReference type="Gene3D" id="3.40.50.300">
    <property type="entry name" value="P-loop containing nucleotide triphosphate hydrolases"/>
    <property type="match status" value="1"/>
</dbReference>
<dbReference type="HAMAP" id="MF_00185">
    <property type="entry name" value="IPP_trans"/>
    <property type="match status" value="1"/>
</dbReference>
<dbReference type="InterPro" id="IPR039657">
    <property type="entry name" value="Dimethylallyltransferase"/>
</dbReference>
<dbReference type="InterPro" id="IPR018022">
    <property type="entry name" value="IPT"/>
</dbReference>
<dbReference type="InterPro" id="IPR027417">
    <property type="entry name" value="P-loop_NTPase"/>
</dbReference>
<dbReference type="NCBIfam" id="TIGR00174">
    <property type="entry name" value="miaA"/>
    <property type="match status" value="1"/>
</dbReference>
<dbReference type="PANTHER" id="PTHR11088">
    <property type="entry name" value="TRNA DIMETHYLALLYLTRANSFERASE"/>
    <property type="match status" value="1"/>
</dbReference>
<dbReference type="PANTHER" id="PTHR11088:SF60">
    <property type="entry name" value="TRNA DIMETHYLALLYLTRANSFERASE"/>
    <property type="match status" value="1"/>
</dbReference>
<dbReference type="Pfam" id="PF01715">
    <property type="entry name" value="IPPT"/>
    <property type="match status" value="1"/>
</dbReference>
<dbReference type="SUPFAM" id="SSF52540">
    <property type="entry name" value="P-loop containing nucleoside triphosphate hydrolases"/>
    <property type="match status" value="1"/>
</dbReference>
<feature type="chain" id="PRO_0000377372" description="tRNA dimethylallyltransferase">
    <location>
        <begin position="1"/>
        <end position="327"/>
    </location>
</feature>
<feature type="region of interest" description="Interaction with substrate tRNA" evidence="1">
    <location>
        <begin position="39"/>
        <end position="42"/>
    </location>
</feature>
<feature type="region of interest" description="Interaction with substrate tRNA" evidence="1">
    <location>
        <begin position="163"/>
        <end position="167"/>
    </location>
</feature>
<feature type="binding site" evidence="1">
    <location>
        <begin position="14"/>
        <end position="21"/>
    </location>
    <ligand>
        <name>ATP</name>
        <dbReference type="ChEBI" id="CHEBI:30616"/>
    </ligand>
</feature>
<feature type="binding site" evidence="1">
    <location>
        <begin position="16"/>
        <end position="21"/>
    </location>
    <ligand>
        <name>substrate</name>
    </ligand>
</feature>
<feature type="site" description="Interaction with substrate tRNA" evidence="1">
    <location>
        <position position="105"/>
    </location>
</feature>
<feature type="site" description="Interaction with substrate tRNA" evidence="1">
    <location>
        <position position="127"/>
    </location>
</feature>
<sequence>MPADQRPLAIALMGPTASGKTALALEAAERWNGEIVSVDSALVYRGLEIGAAKPDAAMRAAVPHHLLDLRDPWQVYSAAEFAGDARQAIAQIVARGKLPILAGGTGLYFRALLEGLSHLPEADRAARASIAAEAAQIGWAGLHSELARVDPVAAARIHATDPQRIQRALEVYRISGRPISYWQALPPGLRLPVRVLKVVLAPRERAVLHGRIERRLDAMLAQGFLAEVEQVRALPQMRAVAVPLDLPAVRAVGYRQAWEYLDGAGSLAEFRDKAIQATRQLAKRQLTWLRGELDARWFDPERDRHQLERALVGFLGDRSAVRQASGV</sequence>
<protein>
    <recommendedName>
        <fullName evidence="1">tRNA dimethylallyltransferase</fullName>
        <ecNumber evidence="1">2.5.1.75</ecNumber>
    </recommendedName>
    <alternativeName>
        <fullName evidence="1">Dimethylallyl diphosphate:tRNA dimethylallyltransferase</fullName>
        <shortName evidence="1">DMAPP:tRNA dimethylallyltransferase</shortName>
        <shortName evidence="1">DMATase</shortName>
    </alternativeName>
    <alternativeName>
        <fullName evidence="1">Isopentenyl-diphosphate:tRNA isopentenyltransferase</fullName>
        <shortName evidence="1">IPP transferase</shortName>
        <shortName evidence="1">IPPT</shortName>
        <shortName evidence="1">IPTase</shortName>
    </alternativeName>
</protein>
<proteinExistence type="inferred from homology"/>